<protein>
    <recommendedName>
        <fullName evidence="1">UPF0114 protein HPP12_0190</fullName>
    </recommendedName>
</protein>
<comment type="subcellular location">
    <subcellularLocation>
        <location evidence="1">Cell membrane</location>
        <topology evidence="1">Multi-pass membrane protein</topology>
    </subcellularLocation>
</comment>
<comment type="similarity">
    <text evidence="1">Belongs to the UPF0114 family.</text>
</comment>
<dbReference type="EMBL" id="CP001217">
    <property type="protein sequence ID" value="ACJ07350.1"/>
    <property type="molecule type" value="Genomic_DNA"/>
</dbReference>
<dbReference type="KEGG" id="hpp:HPP12_0190"/>
<dbReference type="HOGENOM" id="CLU_097887_1_0_7"/>
<dbReference type="Proteomes" id="UP000008198">
    <property type="component" value="Chromosome"/>
</dbReference>
<dbReference type="GO" id="GO:0005886">
    <property type="term" value="C:plasma membrane"/>
    <property type="evidence" value="ECO:0007669"/>
    <property type="project" value="UniProtKB-SubCell"/>
</dbReference>
<dbReference type="HAMAP" id="MF_00143">
    <property type="entry name" value="UPF0114"/>
    <property type="match status" value="1"/>
</dbReference>
<dbReference type="InterPro" id="IPR005134">
    <property type="entry name" value="UPF0114"/>
</dbReference>
<dbReference type="InterPro" id="IPR020761">
    <property type="entry name" value="UPF0114_bac"/>
</dbReference>
<dbReference type="NCBIfam" id="TIGR00645">
    <property type="entry name" value="HI0507"/>
    <property type="match status" value="1"/>
</dbReference>
<dbReference type="PANTHER" id="PTHR38596">
    <property type="entry name" value="UPF0114 PROTEIN YQHA"/>
    <property type="match status" value="1"/>
</dbReference>
<dbReference type="PANTHER" id="PTHR38596:SF1">
    <property type="entry name" value="UPF0114 PROTEIN YQHA"/>
    <property type="match status" value="1"/>
</dbReference>
<dbReference type="Pfam" id="PF03350">
    <property type="entry name" value="UPF0114"/>
    <property type="match status" value="1"/>
</dbReference>
<organism>
    <name type="scientific">Helicobacter pylori (strain P12)</name>
    <dbReference type="NCBI Taxonomy" id="570508"/>
    <lineage>
        <taxon>Bacteria</taxon>
        <taxon>Pseudomonadati</taxon>
        <taxon>Campylobacterota</taxon>
        <taxon>Epsilonproteobacteria</taxon>
        <taxon>Campylobacterales</taxon>
        <taxon>Helicobacteraceae</taxon>
        <taxon>Helicobacter</taxon>
    </lineage>
</organism>
<sequence>MLEKLIERVLFATRWLLAPLCIAMSLVLVVLGYAFMKELWHMLSHLDTISETDLVLSALGLVDLLFMAGLVLMVLLASYESFVSKLDKVDASEITWLKHTDFNALKLKVSLSIVAISAIFLLKRYMSLEDVLSSIPKDTPLSHNPIFWQVVINLVFVCSALLAAVTNNIAFSQNKAH</sequence>
<gene>
    <name type="ordered locus">HPP12_0190</name>
</gene>
<evidence type="ECO:0000255" key="1">
    <source>
        <dbReference type="HAMAP-Rule" id="MF_00143"/>
    </source>
</evidence>
<proteinExistence type="inferred from homology"/>
<accession>B6JPT9</accession>
<reference key="1">
    <citation type="submission" date="2008-10" db="EMBL/GenBank/DDBJ databases">
        <title>The complete genome sequence of Helicobacter pylori strain P12.</title>
        <authorList>
            <person name="Fischer W."/>
            <person name="Windhager L."/>
            <person name="Karnholz A."/>
            <person name="Zeiller M."/>
            <person name="Zimmer R."/>
            <person name="Haas R."/>
        </authorList>
    </citation>
    <scope>NUCLEOTIDE SEQUENCE [LARGE SCALE GENOMIC DNA]</scope>
    <source>
        <strain>P12</strain>
    </source>
</reference>
<keyword id="KW-1003">Cell membrane</keyword>
<keyword id="KW-0472">Membrane</keyword>
<keyword id="KW-0812">Transmembrane</keyword>
<keyword id="KW-1133">Transmembrane helix</keyword>
<feature type="chain" id="PRO_1000096267" description="UPF0114 protein HPP12_0190">
    <location>
        <begin position="1"/>
        <end position="177"/>
    </location>
</feature>
<feature type="transmembrane region" description="Helical" evidence="1">
    <location>
        <begin position="15"/>
        <end position="35"/>
    </location>
</feature>
<feature type="transmembrane region" description="Helical" evidence="1">
    <location>
        <begin position="54"/>
        <end position="74"/>
    </location>
</feature>
<feature type="transmembrane region" description="Helical" evidence="1">
    <location>
        <begin position="102"/>
        <end position="122"/>
    </location>
</feature>
<feature type="transmembrane region" description="Helical" evidence="1">
    <location>
        <begin position="145"/>
        <end position="165"/>
    </location>
</feature>
<name>Y190_HELP2</name>